<comment type="function">
    <text evidence="1">Responsible for channeling the electrons from the oxidation of dihydroorotate from the FMN redox center in the PyrD type B subunit to the ultimate electron acceptor NAD(+).</text>
</comment>
<comment type="cofactor">
    <cofactor evidence="1">
        <name>[2Fe-2S] cluster</name>
        <dbReference type="ChEBI" id="CHEBI:190135"/>
    </cofactor>
    <text evidence="1">Binds 1 [2Fe-2S] cluster per subunit.</text>
</comment>
<comment type="cofactor">
    <cofactor evidence="1">
        <name>FAD</name>
        <dbReference type="ChEBI" id="CHEBI:57692"/>
    </cofactor>
    <text evidence="1">Binds 1 FAD per subunit.</text>
</comment>
<comment type="pathway">
    <text evidence="1">Pyrimidine metabolism; UMP biosynthesis via de novo pathway; orotate from (S)-dihydroorotate (NAD(+) route): step 1/1.</text>
</comment>
<comment type="subunit">
    <text evidence="1">Heterotetramer of 2 PyrK and 2 PyrD type B subunits.</text>
</comment>
<comment type="similarity">
    <text evidence="1">Belongs to the PyrK family.</text>
</comment>
<gene>
    <name evidence="1" type="primary">pyrK</name>
    <name type="synonym">pyrZ</name>
    <name type="ordered locus">CPE1179</name>
</gene>
<accession>Q8XL63</accession>
<dbReference type="EMBL" id="BA000016">
    <property type="protein sequence ID" value="BAB80885.1"/>
    <property type="molecule type" value="Genomic_DNA"/>
</dbReference>
<dbReference type="RefSeq" id="WP_011010308.1">
    <property type="nucleotide sequence ID" value="NC_003366.1"/>
</dbReference>
<dbReference type="SMR" id="Q8XL63"/>
<dbReference type="STRING" id="195102.gene:10490442"/>
<dbReference type="KEGG" id="cpe:CPE1179"/>
<dbReference type="HOGENOM" id="CLU_003827_1_2_9"/>
<dbReference type="UniPathway" id="UPA00070">
    <property type="reaction ID" value="UER00945"/>
</dbReference>
<dbReference type="Proteomes" id="UP000000818">
    <property type="component" value="Chromosome"/>
</dbReference>
<dbReference type="GO" id="GO:0051537">
    <property type="term" value="F:2 iron, 2 sulfur cluster binding"/>
    <property type="evidence" value="ECO:0007669"/>
    <property type="project" value="UniProtKB-KW"/>
</dbReference>
<dbReference type="GO" id="GO:0009055">
    <property type="term" value="F:electron transfer activity"/>
    <property type="evidence" value="ECO:0007669"/>
    <property type="project" value="UniProtKB-UniRule"/>
</dbReference>
<dbReference type="GO" id="GO:0050660">
    <property type="term" value="F:flavin adenine dinucleotide binding"/>
    <property type="evidence" value="ECO:0007669"/>
    <property type="project" value="InterPro"/>
</dbReference>
<dbReference type="GO" id="GO:0046872">
    <property type="term" value="F:metal ion binding"/>
    <property type="evidence" value="ECO:0007669"/>
    <property type="project" value="UniProtKB-KW"/>
</dbReference>
<dbReference type="GO" id="GO:0016491">
    <property type="term" value="F:oxidoreductase activity"/>
    <property type="evidence" value="ECO:0007669"/>
    <property type="project" value="InterPro"/>
</dbReference>
<dbReference type="GO" id="GO:0044205">
    <property type="term" value="P:'de novo' UMP biosynthetic process"/>
    <property type="evidence" value="ECO:0007669"/>
    <property type="project" value="UniProtKB-UniRule"/>
</dbReference>
<dbReference type="CDD" id="cd06218">
    <property type="entry name" value="DHOD_e_trans"/>
    <property type="match status" value="1"/>
</dbReference>
<dbReference type="Gene3D" id="2.10.240.10">
    <property type="entry name" value="Dihydroorotate dehydrogenase, electron transfer subunit"/>
    <property type="match status" value="1"/>
</dbReference>
<dbReference type="Gene3D" id="3.40.50.80">
    <property type="entry name" value="Nucleotide-binding domain of ferredoxin-NADP reductase (FNR) module"/>
    <property type="match status" value="1"/>
</dbReference>
<dbReference type="Gene3D" id="2.40.30.10">
    <property type="entry name" value="Translation factors"/>
    <property type="match status" value="1"/>
</dbReference>
<dbReference type="HAMAP" id="MF_01211">
    <property type="entry name" value="DHODB_Fe_S_bind"/>
    <property type="match status" value="1"/>
</dbReference>
<dbReference type="InterPro" id="IPR012165">
    <property type="entry name" value="Cyt_c3_hydrogenase_gsu"/>
</dbReference>
<dbReference type="InterPro" id="IPR037117">
    <property type="entry name" value="Dihydroorotate_DH_ele_sf"/>
</dbReference>
<dbReference type="InterPro" id="IPR019480">
    <property type="entry name" value="Dihydroorotate_DH_Fe-S-bd"/>
</dbReference>
<dbReference type="InterPro" id="IPR023455">
    <property type="entry name" value="Dihydroorotate_DHASE_ETsu"/>
</dbReference>
<dbReference type="InterPro" id="IPR017927">
    <property type="entry name" value="FAD-bd_FR_type"/>
</dbReference>
<dbReference type="InterPro" id="IPR039261">
    <property type="entry name" value="FNR_nucleotide-bd"/>
</dbReference>
<dbReference type="InterPro" id="IPR001433">
    <property type="entry name" value="OxRdtase_FAD/NAD-bd"/>
</dbReference>
<dbReference type="InterPro" id="IPR050353">
    <property type="entry name" value="PyrK_electron_transfer"/>
</dbReference>
<dbReference type="InterPro" id="IPR017938">
    <property type="entry name" value="Riboflavin_synthase-like_b-brl"/>
</dbReference>
<dbReference type="NCBIfam" id="NF000798">
    <property type="entry name" value="PRK00054.1-3"/>
    <property type="match status" value="1"/>
</dbReference>
<dbReference type="PANTHER" id="PTHR43513">
    <property type="entry name" value="DIHYDROOROTATE DEHYDROGENASE B (NAD(+)), ELECTRON TRANSFER SUBUNIT"/>
    <property type="match status" value="1"/>
</dbReference>
<dbReference type="PANTHER" id="PTHR43513:SF3">
    <property type="entry name" value="DIHYDROOROTATE DEHYDROGENASE B (NAD(+)), ELECTRON TRANSFER SUBUNIT-RELATED"/>
    <property type="match status" value="1"/>
</dbReference>
<dbReference type="Pfam" id="PF10418">
    <property type="entry name" value="DHODB_Fe-S_bind"/>
    <property type="match status" value="1"/>
</dbReference>
<dbReference type="Pfam" id="PF00175">
    <property type="entry name" value="NAD_binding_1"/>
    <property type="match status" value="1"/>
</dbReference>
<dbReference type="PIRSF" id="PIRSF006816">
    <property type="entry name" value="Cyc3_hyd_g"/>
    <property type="match status" value="1"/>
</dbReference>
<dbReference type="SUPFAM" id="SSF52343">
    <property type="entry name" value="Ferredoxin reductase-like, C-terminal NADP-linked domain"/>
    <property type="match status" value="1"/>
</dbReference>
<dbReference type="SUPFAM" id="SSF63380">
    <property type="entry name" value="Riboflavin synthase domain-like"/>
    <property type="match status" value="1"/>
</dbReference>
<dbReference type="PROSITE" id="PS51384">
    <property type="entry name" value="FAD_FR"/>
    <property type="match status" value="1"/>
</dbReference>
<reference key="1">
    <citation type="journal article" date="2002" name="Proc. Natl. Acad. Sci. U.S.A.">
        <title>Complete genome sequence of Clostridium perfringens, an anaerobic flesh-eater.</title>
        <authorList>
            <person name="Shimizu T."/>
            <person name="Ohtani K."/>
            <person name="Hirakawa H."/>
            <person name="Ohshima K."/>
            <person name="Yamashita A."/>
            <person name="Shiba T."/>
            <person name="Ogasawara N."/>
            <person name="Hattori M."/>
            <person name="Kuhara S."/>
            <person name="Hayashi H."/>
        </authorList>
    </citation>
    <scope>NUCLEOTIDE SEQUENCE [LARGE SCALE GENOMIC DNA]</scope>
    <source>
        <strain>13 / Type A</strain>
    </source>
</reference>
<evidence type="ECO:0000255" key="1">
    <source>
        <dbReference type="HAMAP-Rule" id="MF_01211"/>
    </source>
</evidence>
<name>PYRK_CLOPE</name>
<sequence length="246" mass="27200">MAMEYFKGKVKENIELVEGIYSLVVEHEAKINAGQFYMIKTPNTFLGRPISVCEVNGNDVRFVYATVGAGTNEMKKMISGDEIEIIGPLGNGFDINKDYGRVALVSGGIGTAPMLELAKSLRKNNKDIKMDFYGGFRDDIYLVDEIAEYVDEVKISTNTGKHGHKGFVTEILPLQEYDTVLCCGPEIMMKKVVEMCKEAKVNVYISMEKHMACGVGACLVCICKTKSGNKRTCKDGPVFNGLEVEF</sequence>
<feature type="chain" id="PRO_0000148359" description="Dihydroorotate dehydrogenase B (NAD(+)), electron transfer subunit">
    <location>
        <begin position="1"/>
        <end position="246"/>
    </location>
</feature>
<feature type="domain" description="FAD-binding FR-type" evidence="1">
    <location>
        <begin position="3"/>
        <end position="95"/>
    </location>
</feature>
<feature type="binding site" evidence="1">
    <location>
        <begin position="48"/>
        <end position="51"/>
    </location>
    <ligand>
        <name>FAD</name>
        <dbReference type="ChEBI" id="CHEBI:57692"/>
    </ligand>
</feature>
<feature type="binding site" evidence="1">
    <location>
        <begin position="70"/>
        <end position="71"/>
    </location>
    <ligand>
        <name>FAD</name>
        <dbReference type="ChEBI" id="CHEBI:57692"/>
    </ligand>
</feature>
<feature type="binding site" evidence="1">
    <location>
        <position position="213"/>
    </location>
    <ligand>
        <name>[2Fe-2S] cluster</name>
        <dbReference type="ChEBI" id="CHEBI:190135"/>
    </ligand>
</feature>
<feature type="binding site" evidence="1">
    <location>
        <position position="218"/>
    </location>
    <ligand>
        <name>[2Fe-2S] cluster</name>
        <dbReference type="ChEBI" id="CHEBI:190135"/>
    </ligand>
</feature>
<feature type="binding site" evidence="1">
    <location>
        <position position="221"/>
    </location>
    <ligand>
        <name>[2Fe-2S] cluster</name>
        <dbReference type="ChEBI" id="CHEBI:190135"/>
    </ligand>
</feature>
<feature type="binding site" evidence="1">
    <location>
        <position position="233"/>
    </location>
    <ligand>
        <name>[2Fe-2S] cluster</name>
        <dbReference type="ChEBI" id="CHEBI:190135"/>
    </ligand>
</feature>
<organism>
    <name type="scientific">Clostridium perfringens (strain 13 / Type A)</name>
    <dbReference type="NCBI Taxonomy" id="195102"/>
    <lineage>
        <taxon>Bacteria</taxon>
        <taxon>Bacillati</taxon>
        <taxon>Bacillota</taxon>
        <taxon>Clostridia</taxon>
        <taxon>Eubacteriales</taxon>
        <taxon>Clostridiaceae</taxon>
        <taxon>Clostridium</taxon>
    </lineage>
</organism>
<protein>
    <recommendedName>
        <fullName evidence="1">Dihydroorotate dehydrogenase B (NAD(+)), electron transfer subunit</fullName>
    </recommendedName>
    <alternativeName>
        <fullName evidence="1">Dihydroorotate oxidase B, electron transfer subunit</fullName>
    </alternativeName>
</protein>
<keyword id="KW-0001">2Fe-2S</keyword>
<keyword id="KW-0249">Electron transport</keyword>
<keyword id="KW-0274">FAD</keyword>
<keyword id="KW-0285">Flavoprotein</keyword>
<keyword id="KW-0408">Iron</keyword>
<keyword id="KW-0411">Iron-sulfur</keyword>
<keyword id="KW-0479">Metal-binding</keyword>
<keyword id="KW-0665">Pyrimidine biosynthesis</keyword>
<keyword id="KW-1185">Reference proteome</keyword>
<keyword id="KW-0813">Transport</keyword>
<proteinExistence type="inferred from homology"/>